<protein>
    <recommendedName>
        <fullName evidence="1">Indole-3-glycerol phosphate synthase</fullName>
        <shortName evidence="1">IGPS</shortName>
        <ecNumber evidence="1">4.1.1.48</ecNumber>
    </recommendedName>
</protein>
<dbReference type="EC" id="4.1.1.48" evidence="1"/>
<dbReference type="EMBL" id="CP000270">
    <property type="protein sequence ID" value="ABE32475.1"/>
    <property type="molecule type" value="Genomic_DNA"/>
</dbReference>
<dbReference type="RefSeq" id="WP_011489942.1">
    <property type="nucleotide sequence ID" value="NC_007951.1"/>
</dbReference>
<dbReference type="SMR" id="Q13TW4"/>
<dbReference type="STRING" id="266265.Bxe_A0458"/>
<dbReference type="KEGG" id="bxb:DR64_2628"/>
<dbReference type="KEGG" id="bxe:Bxe_A0458"/>
<dbReference type="PATRIC" id="fig|266265.5.peg.4160"/>
<dbReference type="eggNOG" id="COG0134">
    <property type="taxonomic scope" value="Bacteria"/>
</dbReference>
<dbReference type="OrthoDB" id="9804217at2"/>
<dbReference type="UniPathway" id="UPA00035">
    <property type="reaction ID" value="UER00043"/>
</dbReference>
<dbReference type="Proteomes" id="UP000001817">
    <property type="component" value="Chromosome 1"/>
</dbReference>
<dbReference type="GO" id="GO:0004425">
    <property type="term" value="F:indole-3-glycerol-phosphate synthase activity"/>
    <property type="evidence" value="ECO:0007669"/>
    <property type="project" value="UniProtKB-UniRule"/>
</dbReference>
<dbReference type="GO" id="GO:0004640">
    <property type="term" value="F:phosphoribosylanthranilate isomerase activity"/>
    <property type="evidence" value="ECO:0007669"/>
    <property type="project" value="TreeGrafter"/>
</dbReference>
<dbReference type="GO" id="GO:0000162">
    <property type="term" value="P:L-tryptophan biosynthetic process"/>
    <property type="evidence" value="ECO:0007669"/>
    <property type="project" value="UniProtKB-UniRule"/>
</dbReference>
<dbReference type="CDD" id="cd00331">
    <property type="entry name" value="IGPS"/>
    <property type="match status" value="1"/>
</dbReference>
<dbReference type="FunFam" id="3.20.20.70:FF:000024">
    <property type="entry name" value="Indole-3-glycerol phosphate synthase"/>
    <property type="match status" value="1"/>
</dbReference>
<dbReference type="Gene3D" id="3.20.20.70">
    <property type="entry name" value="Aldolase class I"/>
    <property type="match status" value="1"/>
</dbReference>
<dbReference type="HAMAP" id="MF_00134_B">
    <property type="entry name" value="IGPS_B"/>
    <property type="match status" value="1"/>
</dbReference>
<dbReference type="InterPro" id="IPR013785">
    <property type="entry name" value="Aldolase_TIM"/>
</dbReference>
<dbReference type="InterPro" id="IPR045186">
    <property type="entry name" value="Indole-3-glycerol_P_synth"/>
</dbReference>
<dbReference type="InterPro" id="IPR013798">
    <property type="entry name" value="Indole-3-glycerol_P_synth_dom"/>
</dbReference>
<dbReference type="InterPro" id="IPR001468">
    <property type="entry name" value="Indole-3-GlycerolPSynthase_CS"/>
</dbReference>
<dbReference type="InterPro" id="IPR011060">
    <property type="entry name" value="RibuloseP-bd_barrel"/>
</dbReference>
<dbReference type="NCBIfam" id="NF001373">
    <property type="entry name" value="PRK00278.1-6"/>
    <property type="match status" value="1"/>
</dbReference>
<dbReference type="NCBIfam" id="NF001377">
    <property type="entry name" value="PRK00278.2-4"/>
    <property type="match status" value="1"/>
</dbReference>
<dbReference type="PANTHER" id="PTHR22854:SF2">
    <property type="entry name" value="INDOLE-3-GLYCEROL-PHOSPHATE SYNTHASE"/>
    <property type="match status" value="1"/>
</dbReference>
<dbReference type="PANTHER" id="PTHR22854">
    <property type="entry name" value="TRYPTOPHAN BIOSYNTHESIS PROTEIN"/>
    <property type="match status" value="1"/>
</dbReference>
<dbReference type="Pfam" id="PF00218">
    <property type="entry name" value="IGPS"/>
    <property type="match status" value="1"/>
</dbReference>
<dbReference type="SUPFAM" id="SSF51366">
    <property type="entry name" value="Ribulose-phoshate binding barrel"/>
    <property type="match status" value="1"/>
</dbReference>
<dbReference type="PROSITE" id="PS00614">
    <property type="entry name" value="IGPS"/>
    <property type="match status" value="1"/>
</dbReference>
<organism>
    <name type="scientific">Paraburkholderia xenovorans (strain LB400)</name>
    <dbReference type="NCBI Taxonomy" id="266265"/>
    <lineage>
        <taxon>Bacteria</taxon>
        <taxon>Pseudomonadati</taxon>
        <taxon>Pseudomonadota</taxon>
        <taxon>Betaproteobacteria</taxon>
        <taxon>Burkholderiales</taxon>
        <taxon>Burkholderiaceae</taxon>
        <taxon>Paraburkholderia</taxon>
    </lineage>
</organism>
<comment type="catalytic activity">
    <reaction evidence="1">
        <text>1-(2-carboxyphenylamino)-1-deoxy-D-ribulose 5-phosphate + H(+) = (1S,2R)-1-C-(indol-3-yl)glycerol 3-phosphate + CO2 + H2O</text>
        <dbReference type="Rhea" id="RHEA:23476"/>
        <dbReference type="ChEBI" id="CHEBI:15377"/>
        <dbReference type="ChEBI" id="CHEBI:15378"/>
        <dbReference type="ChEBI" id="CHEBI:16526"/>
        <dbReference type="ChEBI" id="CHEBI:58613"/>
        <dbReference type="ChEBI" id="CHEBI:58866"/>
        <dbReference type="EC" id="4.1.1.48"/>
    </reaction>
</comment>
<comment type="pathway">
    <text evidence="1">Amino-acid biosynthesis; L-tryptophan biosynthesis; L-tryptophan from chorismate: step 4/5.</text>
</comment>
<comment type="similarity">
    <text evidence="1">Belongs to the TrpC family.</text>
</comment>
<evidence type="ECO:0000255" key="1">
    <source>
        <dbReference type="HAMAP-Rule" id="MF_00134"/>
    </source>
</evidence>
<sequence length="261" mass="28706">MSDILDRIIAVKREEVRAAEQSAPLEELRLEASSRDLRDFVGALRAKHAAGLAAVIAEVKKASPSKGVLREHFVPAEIARSYEKHGAACLSVLTDVQFFKGSVAYLEQARAACNLPVLRKDFIVDPYQIVEARAMGADAILLIAAALETSQMQDLEALAHSLGLAVLVEVHDRDELMEALTLKTPLIGINNRNLRTFETSIETTIGMLEAIPDDRIVVTESGILSRVDVERLRAMDVHTFLVGEAFMRADEPGVELARMFF</sequence>
<accession>Q13TW4</accession>
<name>TRPC_PARXL</name>
<gene>
    <name evidence="1" type="primary">trpC</name>
    <name type="ordered locus">Bxeno_A3937</name>
    <name type="ORF">Bxe_A0458</name>
</gene>
<reference key="1">
    <citation type="journal article" date="2006" name="Proc. Natl. Acad. Sci. U.S.A.">
        <title>Burkholderia xenovorans LB400 harbors a multi-replicon, 9.73-Mbp genome shaped for versatility.</title>
        <authorList>
            <person name="Chain P.S.G."/>
            <person name="Denef V.J."/>
            <person name="Konstantinidis K.T."/>
            <person name="Vergez L.M."/>
            <person name="Agullo L."/>
            <person name="Reyes V.L."/>
            <person name="Hauser L."/>
            <person name="Cordova M."/>
            <person name="Gomez L."/>
            <person name="Gonzalez M."/>
            <person name="Land M."/>
            <person name="Lao V."/>
            <person name="Larimer F."/>
            <person name="LiPuma J.J."/>
            <person name="Mahenthiralingam E."/>
            <person name="Malfatti S.A."/>
            <person name="Marx C.J."/>
            <person name="Parnell J.J."/>
            <person name="Ramette A."/>
            <person name="Richardson P."/>
            <person name="Seeger M."/>
            <person name="Smith D."/>
            <person name="Spilker T."/>
            <person name="Sul W.J."/>
            <person name="Tsoi T.V."/>
            <person name="Ulrich L.E."/>
            <person name="Zhulin I.B."/>
            <person name="Tiedje J.M."/>
        </authorList>
    </citation>
    <scope>NUCLEOTIDE SEQUENCE [LARGE SCALE GENOMIC DNA]</scope>
    <source>
        <strain>LB400</strain>
    </source>
</reference>
<feature type="chain" id="PRO_1000018465" description="Indole-3-glycerol phosphate synthase">
    <location>
        <begin position="1"/>
        <end position="261"/>
    </location>
</feature>
<proteinExistence type="inferred from homology"/>
<keyword id="KW-0028">Amino-acid biosynthesis</keyword>
<keyword id="KW-0057">Aromatic amino acid biosynthesis</keyword>
<keyword id="KW-0210">Decarboxylase</keyword>
<keyword id="KW-0456">Lyase</keyword>
<keyword id="KW-1185">Reference proteome</keyword>
<keyword id="KW-0822">Tryptophan biosynthesis</keyword>